<evidence type="ECO:0000255" key="1">
    <source>
        <dbReference type="HAMAP-Rule" id="MF_01804"/>
    </source>
</evidence>
<evidence type="ECO:0000256" key="2">
    <source>
        <dbReference type="SAM" id="MobiDB-lite"/>
    </source>
</evidence>
<reference key="1">
    <citation type="journal article" date="2006" name="J. Bacteriol.">
        <title>Whole-genome sequence of Listeria welshimeri reveals common steps in genome reduction with Listeria innocua as compared to Listeria monocytogenes.</title>
        <authorList>
            <person name="Hain T."/>
            <person name="Steinweg C."/>
            <person name="Kuenne C.T."/>
            <person name="Billion A."/>
            <person name="Ghai R."/>
            <person name="Chatterjee S.S."/>
            <person name="Domann E."/>
            <person name="Kaerst U."/>
            <person name="Goesmann A."/>
            <person name="Bekel T."/>
            <person name="Bartels D."/>
            <person name="Kaiser O."/>
            <person name="Meyer F."/>
            <person name="Puehler A."/>
            <person name="Weisshaar B."/>
            <person name="Wehland J."/>
            <person name="Liang C."/>
            <person name="Dandekar T."/>
            <person name="Lampidis R."/>
            <person name="Kreft J."/>
            <person name="Goebel W."/>
            <person name="Chakraborty T."/>
        </authorList>
    </citation>
    <scope>NUCLEOTIDE SEQUENCE [LARGE SCALE GENOMIC DNA]</scope>
    <source>
        <strain>ATCC 35897 / DSM 20650 / CCUG 15529 / CIP 8149 / NCTC 11857 / SLCC 5334 / V8</strain>
    </source>
</reference>
<organism>
    <name type="scientific">Listeria welshimeri serovar 6b (strain ATCC 35897 / DSM 20650 / CCUG 15529 / CIP 8149 / NCTC 11857 / SLCC 5334 / V8)</name>
    <dbReference type="NCBI Taxonomy" id="386043"/>
    <lineage>
        <taxon>Bacteria</taxon>
        <taxon>Bacillati</taxon>
        <taxon>Bacillota</taxon>
        <taxon>Bacilli</taxon>
        <taxon>Bacillales</taxon>
        <taxon>Listeriaceae</taxon>
        <taxon>Listeria</taxon>
    </lineage>
</organism>
<sequence>MNREEQFGILESLLFAAGDAGLSTEQLTEVMEITHIEALNLLELLSERYNGNADRGLILLELAGTFQLATKKAHAEYLRKLVEVPSNTVLSQASLETLAIIAYRQPVTRMEVDEVRGVQTDGPIRTLVAKGLVTDKGRVDGAGRAKLYVTTSEFLDAFGLNSLEDLPKLADPEADDPDQNEMDLFFDRFNQSKEQEEE</sequence>
<protein>
    <recommendedName>
        <fullName evidence="1">Segregation and condensation protein B</fullName>
    </recommendedName>
</protein>
<accession>A0AK62</accession>
<name>SCPB_LISW6</name>
<feature type="chain" id="PRO_1000069959" description="Segregation and condensation protein B">
    <location>
        <begin position="1"/>
        <end position="198"/>
    </location>
</feature>
<feature type="region of interest" description="Disordered" evidence="2">
    <location>
        <begin position="167"/>
        <end position="198"/>
    </location>
</feature>
<feature type="compositionally biased region" description="Acidic residues" evidence="2">
    <location>
        <begin position="172"/>
        <end position="181"/>
    </location>
</feature>
<proteinExistence type="inferred from homology"/>
<gene>
    <name evidence="1" type="primary">scpB</name>
    <name type="ordered locus">lwe1976</name>
</gene>
<dbReference type="EMBL" id="AM263198">
    <property type="protein sequence ID" value="CAK21394.1"/>
    <property type="molecule type" value="Genomic_DNA"/>
</dbReference>
<dbReference type="RefSeq" id="WP_011702741.1">
    <property type="nucleotide sequence ID" value="NC_008555.1"/>
</dbReference>
<dbReference type="SMR" id="A0AK62"/>
<dbReference type="STRING" id="386043.lwe1976"/>
<dbReference type="GeneID" id="61189876"/>
<dbReference type="KEGG" id="lwe:lwe1976"/>
<dbReference type="eggNOG" id="COG1386">
    <property type="taxonomic scope" value="Bacteria"/>
</dbReference>
<dbReference type="HOGENOM" id="CLU_045647_5_3_9"/>
<dbReference type="OrthoDB" id="9806226at2"/>
<dbReference type="Proteomes" id="UP000000779">
    <property type="component" value="Chromosome"/>
</dbReference>
<dbReference type="GO" id="GO:0005737">
    <property type="term" value="C:cytoplasm"/>
    <property type="evidence" value="ECO:0007669"/>
    <property type="project" value="UniProtKB-SubCell"/>
</dbReference>
<dbReference type="GO" id="GO:0051301">
    <property type="term" value="P:cell division"/>
    <property type="evidence" value="ECO:0007669"/>
    <property type="project" value="UniProtKB-KW"/>
</dbReference>
<dbReference type="GO" id="GO:0051304">
    <property type="term" value="P:chromosome separation"/>
    <property type="evidence" value="ECO:0007669"/>
    <property type="project" value="InterPro"/>
</dbReference>
<dbReference type="GO" id="GO:0006260">
    <property type="term" value="P:DNA replication"/>
    <property type="evidence" value="ECO:0007669"/>
    <property type="project" value="UniProtKB-UniRule"/>
</dbReference>
<dbReference type="Gene3D" id="1.10.10.10">
    <property type="entry name" value="Winged helix-like DNA-binding domain superfamily/Winged helix DNA-binding domain"/>
    <property type="match status" value="2"/>
</dbReference>
<dbReference type="HAMAP" id="MF_01804">
    <property type="entry name" value="ScpB"/>
    <property type="match status" value="1"/>
</dbReference>
<dbReference type="InterPro" id="IPR005234">
    <property type="entry name" value="ScpB_csome_segregation"/>
</dbReference>
<dbReference type="InterPro" id="IPR036388">
    <property type="entry name" value="WH-like_DNA-bd_sf"/>
</dbReference>
<dbReference type="InterPro" id="IPR036390">
    <property type="entry name" value="WH_DNA-bd_sf"/>
</dbReference>
<dbReference type="NCBIfam" id="TIGR00281">
    <property type="entry name" value="SMC-Scp complex subunit ScpB"/>
    <property type="match status" value="1"/>
</dbReference>
<dbReference type="PANTHER" id="PTHR34298">
    <property type="entry name" value="SEGREGATION AND CONDENSATION PROTEIN B"/>
    <property type="match status" value="1"/>
</dbReference>
<dbReference type="PANTHER" id="PTHR34298:SF2">
    <property type="entry name" value="SEGREGATION AND CONDENSATION PROTEIN B"/>
    <property type="match status" value="1"/>
</dbReference>
<dbReference type="Pfam" id="PF04079">
    <property type="entry name" value="SMC_ScpB"/>
    <property type="match status" value="1"/>
</dbReference>
<dbReference type="PIRSF" id="PIRSF019345">
    <property type="entry name" value="ScpB"/>
    <property type="match status" value="1"/>
</dbReference>
<dbReference type="SUPFAM" id="SSF46785">
    <property type="entry name" value="Winged helix' DNA-binding domain"/>
    <property type="match status" value="2"/>
</dbReference>
<keyword id="KW-0131">Cell cycle</keyword>
<keyword id="KW-0132">Cell division</keyword>
<keyword id="KW-0159">Chromosome partition</keyword>
<keyword id="KW-0963">Cytoplasm</keyword>
<comment type="function">
    <text evidence="1">Participates in chromosomal partition during cell division. May act via the formation of a condensin-like complex containing Smc and ScpA that pull DNA away from mid-cell into both cell halves.</text>
</comment>
<comment type="subunit">
    <text evidence="1">Homodimer. Homodimerization may be required to stabilize the binding of ScpA to the Smc head domains. Component of a cohesin-like complex composed of ScpA, ScpB and the Smc homodimer, in which ScpA and ScpB bind to the head domain of Smc. The presence of the three proteins is required for the association of the complex with DNA.</text>
</comment>
<comment type="subcellular location">
    <subcellularLocation>
        <location evidence="1">Cytoplasm</location>
    </subcellularLocation>
    <text evidence="1">Associated with two foci at the outer edges of the nucleoid region in young cells, and at four foci within both cell halves in older cells.</text>
</comment>
<comment type="similarity">
    <text evidence="1">Belongs to the ScpB family.</text>
</comment>